<reference key="1">
    <citation type="submission" date="2009-01" db="EMBL/GenBank/DDBJ databases">
        <title>Complete sequence of chromosome of Arthrobacter chlorophenolicus A6.</title>
        <authorList>
            <consortium name="US DOE Joint Genome Institute"/>
            <person name="Lucas S."/>
            <person name="Copeland A."/>
            <person name="Lapidus A."/>
            <person name="Glavina del Rio T."/>
            <person name="Tice H."/>
            <person name="Bruce D."/>
            <person name="Goodwin L."/>
            <person name="Pitluck S."/>
            <person name="Goltsman E."/>
            <person name="Clum A."/>
            <person name="Larimer F."/>
            <person name="Land M."/>
            <person name="Hauser L."/>
            <person name="Kyrpides N."/>
            <person name="Mikhailova N."/>
            <person name="Jansson J."/>
            <person name="Richardson P."/>
        </authorList>
    </citation>
    <scope>NUCLEOTIDE SEQUENCE [LARGE SCALE GENOMIC DNA]</scope>
    <source>
        <strain>ATCC 700700 / DSM 12829 / CIP 107037 / JCM 12360 / KCTC 9906 / NCIMB 13794 / A6</strain>
    </source>
</reference>
<accession>B8H9H0</accession>
<comment type="function">
    <text evidence="1">Nucleotidyltransferase involved in the post-translational modification of proteins. It can catalyze the addition of adenosine monophosphate (AMP) or uridine monophosphate (UMP) to a protein, resulting in modifications known as AMPylation and UMPylation.</text>
</comment>
<comment type="catalytic activity">
    <reaction evidence="1">
        <text>L-seryl-[protein] + ATP = 3-O-(5'-adenylyl)-L-seryl-[protein] + diphosphate</text>
        <dbReference type="Rhea" id="RHEA:58120"/>
        <dbReference type="Rhea" id="RHEA-COMP:9863"/>
        <dbReference type="Rhea" id="RHEA-COMP:15073"/>
        <dbReference type="ChEBI" id="CHEBI:29999"/>
        <dbReference type="ChEBI" id="CHEBI:30616"/>
        <dbReference type="ChEBI" id="CHEBI:33019"/>
        <dbReference type="ChEBI" id="CHEBI:142516"/>
        <dbReference type="EC" id="2.7.7.108"/>
    </reaction>
</comment>
<comment type="catalytic activity">
    <reaction evidence="1">
        <text>L-threonyl-[protein] + ATP = 3-O-(5'-adenylyl)-L-threonyl-[protein] + diphosphate</text>
        <dbReference type="Rhea" id="RHEA:54292"/>
        <dbReference type="Rhea" id="RHEA-COMP:11060"/>
        <dbReference type="Rhea" id="RHEA-COMP:13847"/>
        <dbReference type="ChEBI" id="CHEBI:30013"/>
        <dbReference type="ChEBI" id="CHEBI:30616"/>
        <dbReference type="ChEBI" id="CHEBI:33019"/>
        <dbReference type="ChEBI" id="CHEBI:138113"/>
        <dbReference type="EC" id="2.7.7.108"/>
    </reaction>
</comment>
<comment type="catalytic activity">
    <reaction evidence="1">
        <text>L-tyrosyl-[protein] + ATP = O-(5'-adenylyl)-L-tyrosyl-[protein] + diphosphate</text>
        <dbReference type="Rhea" id="RHEA:54288"/>
        <dbReference type="Rhea" id="RHEA-COMP:10136"/>
        <dbReference type="Rhea" id="RHEA-COMP:13846"/>
        <dbReference type="ChEBI" id="CHEBI:30616"/>
        <dbReference type="ChEBI" id="CHEBI:33019"/>
        <dbReference type="ChEBI" id="CHEBI:46858"/>
        <dbReference type="ChEBI" id="CHEBI:83624"/>
        <dbReference type="EC" id="2.7.7.108"/>
    </reaction>
</comment>
<comment type="catalytic activity">
    <reaction evidence="1">
        <text>L-histidyl-[protein] + UTP = N(tele)-(5'-uridylyl)-L-histidyl-[protein] + diphosphate</text>
        <dbReference type="Rhea" id="RHEA:83891"/>
        <dbReference type="Rhea" id="RHEA-COMP:9745"/>
        <dbReference type="Rhea" id="RHEA-COMP:20239"/>
        <dbReference type="ChEBI" id="CHEBI:29979"/>
        <dbReference type="ChEBI" id="CHEBI:33019"/>
        <dbReference type="ChEBI" id="CHEBI:46398"/>
        <dbReference type="ChEBI" id="CHEBI:233474"/>
    </reaction>
</comment>
<comment type="catalytic activity">
    <reaction evidence="1">
        <text>L-seryl-[protein] + UTP = O-(5'-uridylyl)-L-seryl-[protein] + diphosphate</text>
        <dbReference type="Rhea" id="RHEA:64604"/>
        <dbReference type="Rhea" id="RHEA-COMP:9863"/>
        <dbReference type="Rhea" id="RHEA-COMP:16635"/>
        <dbReference type="ChEBI" id="CHEBI:29999"/>
        <dbReference type="ChEBI" id="CHEBI:33019"/>
        <dbReference type="ChEBI" id="CHEBI:46398"/>
        <dbReference type="ChEBI" id="CHEBI:156051"/>
    </reaction>
</comment>
<comment type="catalytic activity">
    <reaction evidence="1">
        <text>L-tyrosyl-[protein] + UTP = O-(5'-uridylyl)-L-tyrosyl-[protein] + diphosphate</text>
        <dbReference type="Rhea" id="RHEA:83887"/>
        <dbReference type="Rhea" id="RHEA-COMP:10136"/>
        <dbReference type="Rhea" id="RHEA-COMP:20238"/>
        <dbReference type="ChEBI" id="CHEBI:33019"/>
        <dbReference type="ChEBI" id="CHEBI:46398"/>
        <dbReference type="ChEBI" id="CHEBI:46858"/>
        <dbReference type="ChEBI" id="CHEBI:90602"/>
    </reaction>
</comment>
<comment type="cofactor">
    <cofactor evidence="1">
        <name>Mg(2+)</name>
        <dbReference type="ChEBI" id="CHEBI:18420"/>
    </cofactor>
    <cofactor evidence="1">
        <name>Mn(2+)</name>
        <dbReference type="ChEBI" id="CHEBI:29035"/>
    </cofactor>
</comment>
<comment type="similarity">
    <text evidence="1">Belongs to the SELO family.</text>
</comment>
<feature type="chain" id="PRO_1000200053" description="Protein nucleotidyltransferase YdiU">
    <location>
        <begin position="1"/>
        <end position="491"/>
    </location>
</feature>
<feature type="active site" description="Proton acceptor" evidence="1">
    <location>
        <position position="254"/>
    </location>
</feature>
<feature type="binding site" evidence="1">
    <location>
        <position position="92"/>
    </location>
    <ligand>
        <name>ATP</name>
        <dbReference type="ChEBI" id="CHEBI:30616"/>
    </ligand>
</feature>
<feature type="binding site" evidence="1">
    <location>
        <position position="94"/>
    </location>
    <ligand>
        <name>ATP</name>
        <dbReference type="ChEBI" id="CHEBI:30616"/>
    </ligand>
</feature>
<feature type="binding site" evidence="1">
    <location>
        <position position="95"/>
    </location>
    <ligand>
        <name>ATP</name>
        <dbReference type="ChEBI" id="CHEBI:30616"/>
    </ligand>
</feature>
<feature type="binding site" evidence="1">
    <location>
        <position position="115"/>
    </location>
    <ligand>
        <name>ATP</name>
        <dbReference type="ChEBI" id="CHEBI:30616"/>
    </ligand>
</feature>
<feature type="binding site" evidence="1">
    <location>
        <position position="127"/>
    </location>
    <ligand>
        <name>ATP</name>
        <dbReference type="ChEBI" id="CHEBI:30616"/>
    </ligand>
</feature>
<feature type="binding site" evidence="1">
    <location>
        <position position="128"/>
    </location>
    <ligand>
        <name>ATP</name>
        <dbReference type="ChEBI" id="CHEBI:30616"/>
    </ligand>
</feature>
<feature type="binding site" evidence="1">
    <location>
        <position position="178"/>
    </location>
    <ligand>
        <name>ATP</name>
        <dbReference type="ChEBI" id="CHEBI:30616"/>
    </ligand>
</feature>
<feature type="binding site" evidence="1">
    <location>
        <position position="185"/>
    </location>
    <ligand>
        <name>ATP</name>
        <dbReference type="ChEBI" id="CHEBI:30616"/>
    </ligand>
</feature>
<feature type="binding site" evidence="1">
    <location>
        <position position="255"/>
    </location>
    <ligand>
        <name>Mg(2+)</name>
        <dbReference type="ChEBI" id="CHEBI:18420"/>
    </ligand>
</feature>
<feature type="binding site" evidence="1">
    <location>
        <position position="264"/>
    </location>
    <ligand>
        <name>ATP</name>
        <dbReference type="ChEBI" id="CHEBI:30616"/>
    </ligand>
</feature>
<feature type="binding site" evidence="1">
    <location>
        <position position="264"/>
    </location>
    <ligand>
        <name>Mg(2+)</name>
        <dbReference type="ChEBI" id="CHEBI:18420"/>
    </ligand>
</feature>
<dbReference type="EC" id="2.7.7.-" evidence="1"/>
<dbReference type="EC" id="2.7.7.108" evidence="1"/>
<dbReference type="EMBL" id="CP001341">
    <property type="protein sequence ID" value="ACL40039.1"/>
    <property type="molecule type" value="Genomic_DNA"/>
</dbReference>
<dbReference type="RefSeq" id="WP_015937257.1">
    <property type="nucleotide sequence ID" value="NC_011886.1"/>
</dbReference>
<dbReference type="SMR" id="B8H9H0"/>
<dbReference type="STRING" id="452863.Achl_2066"/>
<dbReference type="KEGG" id="ach:Achl_2066"/>
<dbReference type="eggNOG" id="COG0397">
    <property type="taxonomic scope" value="Bacteria"/>
</dbReference>
<dbReference type="HOGENOM" id="CLU_010245_4_1_11"/>
<dbReference type="OrthoDB" id="9776281at2"/>
<dbReference type="Proteomes" id="UP000002505">
    <property type="component" value="Chromosome"/>
</dbReference>
<dbReference type="GO" id="GO:0070733">
    <property type="term" value="F:AMPylase activity"/>
    <property type="evidence" value="ECO:0007669"/>
    <property type="project" value="TreeGrafter"/>
</dbReference>
<dbReference type="GO" id="GO:0005524">
    <property type="term" value="F:ATP binding"/>
    <property type="evidence" value="ECO:0007669"/>
    <property type="project" value="UniProtKB-UniRule"/>
</dbReference>
<dbReference type="GO" id="GO:0000287">
    <property type="term" value="F:magnesium ion binding"/>
    <property type="evidence" value="ECO:0007669"/>
    <property type="project" value="UniProtKB-UniRule"/>
</dbReference>
<dbReference type="HAMAP" id="MF_00692">
    <property type="entry name" value="YdiU_SelO"/>
    <property type="match status" value="1"/>
</dbReference>
<dbReference type="InterPro" id="IPR003846">
    <property type="entry name" value="SelO"/>
</dbReference>
<dbReference type="NCBIfam" id="NF000658">
    <property type="entry name" value="PRK00029.1"/>
    <property type="match status" value="1"/>
</dbReference>
<dbReference type="PANTHER" id="PTHR32057">
    <property type="entry name" value="PROTEIN ADENYLYLTRANSFERASE SELO, MITOCHONDRIAL"/>
    <property type="match status" value="1"/>
</dbReference>
<dbReference type="PANTHER" id="PTHR32057:SF14">
    <property type="entry name" value="PROTEIN ADENYLYLTRANSFERASE SELO, MITOCHONDRIAL"/>
    <property type="match status" value="1"/>
</dbReference>
<dbReference type="Pfam" id="PF02696">
    <property type="entry name" value="SelO"/>
    <property type="match status" value="1"/>
</dbReference>
<protein>
    <recommendedName>
        <fullName evidence="1">Protein nucleotidyltransferase YdiU</fullName>
        <ecNumber evidence="1">2.7.7.-</ecNumber>
    </recommendedName>
    <alternativeName>
        <fullName evidence="1">Protein adenylyltransferase YdiU</fullName>
        <ecNumber evidence="1">2.7.7.108</ecNumber>
    </alternativeName>
    <alternativeName>
        <fullName evidence="1">Protein uridylyltransferase YdiU</fullName>
        <ecNumber evidence="1">2.7.7.-</ecNumber>
    </alternativeName>
</protein>
<name>SELO_PSECP</name>
<gene>
    <name evidence="1" type="primary">ydiU</name>
    <name evidence="1" type="synonym">selO</name>
    <name type="ordered locus">Achl_2066</name>
</gene>
<organism>
    <name type="scientific">Pseudarthrobacter chlorophenolicus (strain ATCC 700700 / DSM 12829 / CIP 107037 / JCM 12360 / KCTC 9906 / NCIMB 13794 / A6)</name>
    <name type="common">Arthrobacter chlorophenolicus</name>
    <dbReference type="NCBI Taxonomy" id="452863"/>
    <lineage>
        <taxon>Bacteria</taxon>
        <taxon>Bacillati</taxon>
        <taxon>Actinomycetota</taxon>
        <taxon>Actinomycetes</taxon>
        <taxon>Micrococcales</taxon>
        <taxon>Micrococcaceae</taxon>
        <taxon>Pseudarthrobacter</taxon>
    </lineage>
</organism>
<proteinExistence type="inferred from homology"/>
<sequence length="491" mass="52509">MTAAAESTVALGGRFARELNELAVPWEAEEAPDPKLLVLNGPLAAELGLDPEYLSSEEGVRFLLGNHVPDGATPVAQAYAGHQFGGYSPLLGDGRALLLGELQDSRGRLRDLHLKGSGRTPFARAGDGRAVVGPMLREYIVSEAMHALGIPTTRSLAVVATGRQVRRDDMLPGAVLARVAGSHLRVGSFQYARVTENTELLRRLADHAISRHYPEAAAAENPYLALYRAVVAAQASLVAQWMLVGFVHGVMNTDNMTISGETIDYGPCAFIDAFNPAAVYSSIDVGGRYAYANQPVMAEWNLARLAEAMLPLIDEDQEAAVPVAVEALGGFRRQYSAAWSGGMATKLGLAAGEPEAAAGAEVQDLVDGVTGILKDGSVDYTLFFRNLAKAARGDSRPVRGMVMDLAAYDAWAERWQDLAPDAGLMDRTNPAYIPRNHLVEEALAAATGGDLDPLHRLLEAVSAPYSERPGLERYTQGAPEDFGTYMTFCGT</sequence>
<keyword id="KW-0067">ATP-binding</keyword>
<keyword id="KW-0460">Magnesium</keyword>
<keyword id="KW-0464">Manganese</keyword>
<keyword id="KW-0479">Metal-binding</keyword>
<keyword id="KW-0547">Nucleotide-binding</keyword>
<keyword id="KW-0548">Nucleotidyltransferase</keyword>
<keyword id="KW-0808">Transferase</keyword>
<evidence type="ECO:0000255" key="1">
    <source>
        <dbReference type="HAMAP-Rule" id="MF_00692"/>
    </source>
</evidence>